<sequence>MLDPKFLRTELEATAERLATRGFILDVDRLSKLEEKRKSLQVATEELQASRNAISKSIGQAKAKGEDVAPIMAKVGDLGAELSSKEAELKQLLEELNAIAMSVPNLPDESAPIGADENDNVEIRRWGEPKQFDFDVKDHVDLGEQHAGLDFKSAVKITGSRFIVMKGQIARMHRALTQFMLDLHTTEHGYTETYVPLLVNEDSLLGTGQLPKFGEDLFHTKPATEEGQGLSLIPTAEVPLTNLARDTIIDEDELPIKMTAHTACFRSEAGSYGRDTRGLIRQHQFDKVELVQLVKPEDSMAALESLTQHAETVLQRLGLPYRTVVLCTGDMGFGAAKTFDIEVWLPAQNTYREISSCSNMQDFQARRMQARYKAKSAKKPALLHTLNGSGLAVGRTLVAVLENYQNADGSITVPEALRPYMGGLTQIG</sequence>
<comment type="function">
    <text evidence="1">Catalyzes the attachment of serine to tRNA(Ser). Is also able to aminoacylate tRNA(Sec) with serine, to form the misacylated tRNA L-seryl-tRNA(Sec), which will be further converted into selenocysteinyl-tRNA(Sec).</text>
</comment>
<comment type="catalytic activity">
    <reaction evidence="1">
        <text>tRNA(Ser) + L-serine + ATP = L-seryl-tRNA(Ser) + AMP + diphosphate + H(+)</text>
        <dbReference type="Rhea" id="RHEA:12292"/>
        <dbReference type="Rhea" id="RHEA-COMP:9669"/>
        <dbReference type="Rhea" id="RHEA-COMP:9703"/>
        <dbReference type="ChEBI" id="CHEBI:15378"/>
        <dbReference type="ChEBI" id="CHEBI:30616"/>
        <dbReference type="ChEBI" id="CHEBI:33019"/>
        <dbReference type="ChEBI" id="CHEBI:33384"/>
        <dbReference type="ChEBI" id="CHEBI:78442"/>
        <dbReference type="ChEBI" id="CHEBI:78533"/>
        <dbReference type="ChEBI" id="CHEBI:456215"/>
        <dbReference type="EC" id="6.1.1.11"/>
    </reaction>
</comment>
<comment type="catalytic activity">
    <reaction evidence="1">
        <text>tRNA(Sec) + L-serine + ATP = L-seryl-tRNA(Sec) + AMP + diphosphate + H(+)</text>
        <dbReference type="Rhea" id="RHEA:42580"/>
        <dbReference type="Rhea" id="RHEA-COMP:9742"/>
        <dbReference type="Rhea" id="RHEA-COMP:10128"/>
        <dbReference type="ChEBI" id="CHEBI:15378"/>
        <dbReference type="ChEBI" id="CHEBI:30616"/>
        <dbReference type="ChEBI" id="CHEBI:33019"/>
        <dbReference type="ChEBI" id="CHEBI:33384"/>
        <dbReference type="ChEBI" id="CHEBI:78442"/>
        <dbReference type="ChEBI" id="CHEBI:78533"/>
        <dbReference type="ChEBI" id="CHEBI:456215"/>
        <dbReference type="EC" id="6.1.1.11"/>
    </reaction>
</comment>
<comment type="pathway">
    <text evidence="1">Aminoacyl-tRNA biosynthesis; selenocysteinyl-tRNA(Sec) biosynthesis; L-seryl-tRNA(Sec) from L-serine and tRNA(Sec): step 1/1.</text>
</comment>
<comment type="subunit">
    <text evidence="1">Homodimer. The tRNA molecule binds across the dimer.</text>
</comment>
<comment type="subcellular location">
    <subcellularLocation>
        <location evidence="1">Cytoplasm</location>
    </subcellularLocation>
</comment>
<comment type="domain">
    <text evidence="1">Consists of two distinct domains, a catalytic core and a N-terminal extension that is involved in tRNA binding.</text>
</comment>
<comment type="similarity">
    <text evidence="1">Belongs to the class-II aminoacyl-tRNA synthetase family. Type-1 seryl-tRNA synthetase subfamily.</text>
</comment>
<name>SYS_SHELP</name>
<evidence type="ECO:0000255" key="1">
    <source>
        <dbReference type="HAMAP-Rule" id="MF_00176"/>
    </source>
</evidence>
<dbReference type="EC" id="6.1.1.11" evidence="1"/>
<dbReference type="EMBL" id="CP000606">
    <property type="protein sequence ID" value="ABO23886.1"/>
    <property type="molecule type" value="Genomic_DNA"/>
</dbReference>
<dbReference type="RefSeq" id="WP_011865818.1">
    <property type="nucleotide sequence ID" value="NC_009092.1"/>
</dbReference>
<dbReference type="SMR" id="A3QEI8"/>
<dbReference type="STRING" id="323850.Shew_2020"/>
<dbReference type="KEGG" id="slo:Shew_2020"/>
<dbReference type="eggNOG" id="COG0172">
    <property type="taxonomic scope" value="Bacteria"/>
</dbReference>
<dbReference type="HOGENOM" id="CLU_023797_1_1_6"/>
<dbReference type="OrthoDB" id="9804647at2"/>
<dbReference type="UniPathway" id="UPA00906">
    <property type="reaction ID" value="UER00895"/>
</dbReference>
<dbReference type="Proteomes" id="UP000001558">
    <property type="component" value="Chromosome"/>
</dbReference>
<dbReference type="GO" id="GO:0005737">
    <property type="term" value="C:cytoplasm"/>
    <property type="evidence" value="ECO:0007669"/>
    <property type="project" value="UniProtKB-SubCell"/>
</dbReference>
<dbReference type="GO" id="GO:0005524">
    <property type="term" value="F:ATP binding"/>
    <property type="evidence" value="ECO:0007669"/>
    <property type="project" value="UniProtKB-UniRule"/>
</dbReference>
<dbReference type="GO" id="GO:0004828">
    <property type="term" value="F:serine-tRNA ligase activity"/>
    <property type="evidence" value="ECO:0007669"/>
    <property type="project" value="UniProtKB-UniRule"/>
</dbReference>
<dbReference type="GO" id="GO:0016260">
    <property type="term" value="P:selenocysteine biosynthetic process"/>
    <property type="evidence" value="ECO:0007669"/>
    <property type="project" value="UniProtKB-UniRule"/>
</dbReference>
<dbReference type="GO" id="GO:0006434">
    <property type="term" value="P:seryl-tRNA aminoacylation"/>
    <property type="evidence" value="ECO:0007669"/>
    <property type="project" value="UniProtKB-UniRule"/>
</dbReference>
<dbReference type="CDD" id="cd00770">
    <property type="entry name" value="SerRS_core"/>
    <property type="match status" value="1"/>
</dbReference>
<dbReference type="Gene3D" id="3.30.930.10">
    <property type="entry name" value="Bira Bifunctional Protein, Domain 2"/>
    <property type="match status" value="1"/>
</dbReference>
<dbReference type="Gene3D" id="1.10.287.40">
    <property type="entry name" value="Serine-tRNA synthetase, tRNA binding domain"/>
    <property type="match status" value="1"/>
</dbReference>
<dbReference type="HAMAP" id="MF_00176">
    <property type="entry name" value="Ser_tRNA_synth_type1"/>
    <property type="match status" value="1"/>
</dbReference>
<dbReference type="InterPro" id="IPR002314">
    <property type="entry name" value="aa-tRNA-synt_IIb"/>
</dbReference>
<dbReference type="InterPro" id="IPR006195">
    <property type="entry name" value="aa-tRNA-synth_II"/>
</dbReference>
<dbReference type="InterPro" id="IPR045864">
    <property type="entry name" value="aa-tRNA-synth_II/BPL/LPL"/>
</dbReference>
<dbReference type="InterPro" id="IPR002317">
    <property type="entry name" value="Ser-tRNA-ligase_type_1"/>
</dbReference>
<dbReference type="InterPro" id="IPR015866">
    <property type="entry name" value="Ser-tRNA-synth_1_N"/>
</dbReference>
<dbReference type="InterPro" id="IPR042103">
    <property type="entry name" value="SerRS_1_N_sf"/>
</dbReference>
<dbReference type="InterPro" id="IPR033729">
    <property type="entry name" value="SerRS_core"/>
</dbReference>
<dbReference type="InterPro" id="IPR010978">
    <property type="entry name" value="tRNA-bd_arm"/>
</dbReference>
<dbReference type="NCBIfam" id="TIGR00414">
    <property type="entry name" value="serS"/>
    <property type="match status" value="1"/>
</dbReference>
<dbReference type="PANTHER" id="PTHR43697:SF1">
    <property type="entry name" value="SERINE--TRNA LIGASE"/>
    <property type="match status" value="1"/>
</dbReference>
<dbReference type="PANTHER" id="PTHR43697">
    <property type="entry name" value="SERYL-TRNA SYNTHETASE"/>
    <property type="match status" value="1"/>
</dbReference>
<dbReference type="Pfam" id="PF02403">
    <property type="entry name" value="Seryl_tRNA_N"/>
    <property type="match status" value="1"/>
</dbReference>
<dbReference type="Pfam" id="PF00587">
    <property type="entry name" value="tRNA-synt_2b"/>
    <property type="match status" value="1"/>
</dbReference>
<dbReference type="PIRSF" id="PIRSF001529">
    <property type="entry name" value="Ser-tRNA-synth_IIa"/>
    <property type="match status" value="1"/>
</dbReference>
<dbReference type="PRINTS" id="PR00981">
    <property type="entry name" value="TRNASYNTHSER"/>
</dbReference>
<dbReference type="SUPFAM" id="SSF55681">
    <property type="entry name" value="Class II aaRS and biotin synthetases"/>
    <property type="match status" value="1"/>
</dbReference>
<dbReference type="SUPFAM" id="SSF46589">
    <property type="entry name" value="tRNA-binding arm"/>
    <property type="match status" value="1"/>
</dbReference>
<dbReference type="PROSITE" id="PS50862">
    <property type="entry name" value="AA_TRNA_LIGASE_II"/>
    <property type="match status" value="1"/>
</dbReference>
<proteinExistence type="inferred from homology"/>
<reference key="1">
    <citation type="submission" date="2007-03" db="EMBL/GenBank/DDBJ databases">
        <title>Complete sequence of Shewanella loihica PV-4.</title>
        <authorList>
            <consortium name="US DOE Joint Genome Institute"/>
            <person name="Copeland A."/>
            <person name="Lucas S."/>
            <person name="Lapidus A."/>
            <person name="Barry K."/>
            <person name="Detter J.C."/>
            <person name="Glavina del Rio T."/>
            <person name="Hammon N."/>
            <person name="Israni S."/>
            <person name="Dalin E."/>
            <person name="Tice H."/>
            <person name="Pitluck S."/>
            <person name="Chain P."/>
            <person name="Malfatti S."/>
            <person name="Shin M."/>
            <person name="Vergez L."/>
            <person name="Schmutz J."/>
            <person name="Larimer F."/>
            <person name="Land M."/>
            <person name="Hauser L."/>
            <person name="Kyrpides N."/>
            <person name="Mikhailova N."/>
            <person name="Romine M.F."/>
            <person name="Serres G."/>
            <person name="Fredrickson J."/>
            <person name="Tiedje J."/>
            <person name="Richardson P."/>
        </authorList>
    </citation>
    <scope>NUCLEOTIDE SEQUENCE [LARGE SCALE GENOMIC DNA]</scope>
    <source>
        <strain>ATCC BAA-1088 / PV-4</strain>
    </source>
</reference>
<protein>
    <recommendedName>
        <fullName evidence="1">Serine--tRNA ligase</fullName>
        <ecNumber evidence="1">6.1.1.11</ecNumber>
    </recommendedName>
    <alternativeName>
        <fullName evidence="1">Seryl-tRNA synthetase</fullName>
        <shortName evidence="1">SerRS</shortName>
    </alternativeName>
    <alternativeName>
        <fullName evidence="1">Seryl-tRNA(Ser/Sec) synthetase</fullName>
    </alternativeName>
</protein>
<organism>
    <name type="scientific">Shewanella loihica (strain ATCC BAA-1088 / PV-4)</name>
    <dbReference type="NCBI Taxonomy" id="323850"/>
    <lineage>
        <taxon>Bacteria</taxon>
        <taxon>Pseudomonadati</taxon>
        <taxon>Pseudomonadota</taxon>
        <taxon>Gammaproteobacteria</taxon>
        <taxon>Alteromonadales</taxon>
        <taxon>Shewanellaceae</taxon>
        <taxon>Shewanella</taxon>
    </lineage>
</organism>
<gene>
    <name evidence="1" type="primary">serS</name>
    <name type="ordered locus">Shew_2020</name>
</gene>
<accession>A3QEI8</accession>
<keyword id="KW-0030">Aminoacyl-tRNA synthetase</keyword>
<keyword id="KW-0067">ATP-binding</keyword>
<keyword id="KW-0963">Cytoplasm</keyword>
<keyword id="KW-0436">Ligase</keyword>
<keyword id="KW-0547">Nucleotide-binding</keyword>
<keyword id="KW-0648">Protein biosynthesis</keyword>
<keyword id="KW-1185">Reference proteome</keyword>
<feature type="chain" id="PRO_1000019813" description="Serine--tRNA ligase">
    <location>
        <begin position="1"/>
        <end position="428"/>
    </location>
</feature>
<feature type="binding site" evidence="1">
    <location>
        <begin position="235"/>
        <end position="237"/>
    </location>
    <ligand>
        <name>L-serine</name>
        <dbReference type="ChEBI" id="CHEBI:33384"/>
    </ligand>
</feature>
<feature type="binding site" evidence="1">
    <location>
        <begin position="266"/>
        <end position="268"/>
    </location>
    <ligand>
        <name>ATP</name>
        <dbReference type="ChEBI" id="CHEBI:30616"/>
    </ligand>
</feature>
<feature type="binding site" evidence="1">
    <location>
        <position position="289"/>
    </location>
    <ligand>
        <name>L-serine</name>
        <dbReference type="ChEBI" id="CHEBI:33384"/>
    </ligand>
</feature>
<feature type="binding site" evidence="1">
    <location>
        <begin position="353"/>
        <end position="356"/>
    </location>
    <ligand>
        <name>ATP</name>
        <dbReference type="ChEBI" id="CHEBI:30616"/>
    </ligand>
</feature>
<feature type="binding site" evidence="1">
    <location>
        <position position="389"/>
    </location>
    <ligand>
        <name>L-serine</name>
        <dbReference type="ChEBI" id="CHEBI:33384"/>
    </ligand>
</feature>